<organism>
    <name type="scientific">Mycobacterium bovis (strain ATCC BAA-935 / AF2122/97)</name>
    <dbReference type="NCBI Taxonomy" id="233413"/>
    <lineage>
        <taxon>Bacteria</taxon>
        <taxon>Bacillati</taxon>
        <taxon>Actinomycetota</taxon>
        <taxon>Actinomycetes</taxon>
        <taxon>Mycobacteriales</taxon>
        <taxon>Mycobacteriaceae</taxon>
        <taxon>Mycobacterium</taxon>
        <taxon>Mycobacterium tuberculosis complex</taxon>
    </lineage>
</organism>
<evidence type="ECO:0000250" key="1">
    <source>
        <dbReference type="UniProtKB" id="P9WH23"/>
    </source>
</evidence>
<evidence type="ECO:0000255" key="2"/>
<evidence type="ECO:0000255" key="3">
    <source>
        <dbReference type="PROSITE-ProRule" id="PRU00628"/>
    </source>
</evidence>
<evidence type="ECO:0000256" key="4">
    <source>
        <dbReference type="SAM" id="MobiDB-lite"/>
    </source>
</evidence>
<evidence type="ECO:0000305" key="5"/>
<accession>Q7TYX4</accession>
<accession>A0A1R3Y0L5</accession>
<accession>X2BJK9</accession>
<name>QCRA_MYCBO</name>
<reference key="1">
    <citation type="journal article" date="2003" name="Proc. Natl. Acad. Sci. U.S.A.">
        <title>The complete genome sequence of Mycobacterium bovis.</title>
        <authorList>
            <person name="Garnier T."/>
            <person name="Eiglmeier K."/>
            <person name="Camus J.-C."/>
            <person name="Medina N."/>
            <person name="Mansoor H."/>
            <person name="Pryor M."/>
            <person name="Duthoy S."/>
            <person name="Grondin S."/>
            <person name="Lacroix C."/>
            <person name="Monsempe C."/>
            <person name="Simon S."/>
            <person name="Harris B."/>
            <person name="Atkin R."/>
            <person name="Doggett J."/>
            <person name="Mayes R."/>
            <person name="Keating L."/>
            <person name="Wheeler P.R."/>
            <person name="Parkhill J."/>
            <person name="Barrell B.G."/>
            <person name="Cole S.T."/>
            <person name="Gordon S.V."/>
            <person name="Hewinson R.G."/>
        </authorList>
    </citation>
    <scope>NUCLEOTIDE SEQUENCE [LARGE SCALE GENOMIC DNA]</scope>
    <source>
        <strain>ATCC BAA-935 / AF2122/97</strain>
    </source>
</reference>
<reference key="2">
    <citation type="journal article" date="2017" name="Genome Announc.">
        <title>Updated reference genome sequence and annotation of Mycobacterium bovis AF2122/97.</title>
        <authorList>
            <person name="Malone K.M."/>
            <person name="Farrell D."/>
            <person name="Stuber T.P."/>
            <person name="Schubert O.T."/>
            <person name="Aebersold R."/>
            <person name="Robbe-Austerman S."/>
            <person name="Gordon S.V."/>
        </authorList>
    </citation>
    <scope>NUCLEOTIDE SEQUENCE [LARGE SCALE GENOMIC DNA]</scope>
    <scope>GENOME REANNOTATION</scope>
    <source>
        <strain>ATCC BAA-935 / AF2122/97</strain>
    </source>
</reference>
<comment type="function">
    <text evidence="1">Iron-sulfur subunit of the cytochrome bc1 complex, an essential component of the respiratory electron transport chain required for ATP synthesis. The bc1 complex catalyzes the oxidation of menaquinol and the reduction of cytochrome c in the respiratory chain. The bc1 complex operates through a Q-cycle mechanism that couples electron transfer to generation of the proton gradient that drives ATP synthesis.</text>
</comment>
<comment type="cofactor">
    <cofactor evidence="3">
        <name>[2Fe-2S] cluster</name>
        <dbReference type="ChEBI" id="CHEBI:190135"/>
    </cofactor>
    <text evidence="3">Binds 1 [2Fe-2S] cluster per subunit.</text>
</comment>
<comment type="subunit">
    <text evidence="1">The cytochrome bc1 complex is composed of a cytochrome b (QcrB), the Rieske iron-sulfur protein (QcrA) and a diheme cytochrome c (QcrC) subunit.</text>
</comment>
<comment type="subcellular location">
    <subcellularLocation>
        <location evidence="2">Cell membrane</location>
        <topology evidence="2">Multi-pass membrane protein</topology>
    </subcellularLocation>
</comment>
<comment type="similarity">
    <text evidence="5">Belongs to the Rieske iron-sulfur protein family.</text>
</comment>
<protein>
    <recommendedName>
        <fullName>Cytochrome bc1 complex Rieske iron-sulfur subunit</fullName>
    </recommendedName>
    <alternativeName>
        <fullName>Cytochrome bc1 reductase complex subunit QcrA</fullName>
    </alternativeName>
    <alternativeName>
        <fullName>Rieske iron-sulfur protein</fullName>
    </alternativeName>
    <alternativeName>
        <fullName>Ubiquinol--cytochrome c reductase iron-sulfur subunit</fullName>
    </alternativeName>
</protein>
<dbReference type="EMBL" id="LT708304">
    <property type="protein sequence ID" value="SIU00826.1"/>
    <property type="molecule type" value="Genomic_DNA"/>
</dbReference>
<dbReference type="RefSeq" id="NP_855867.1">
    <property type="nucleotide sequence ID" value="NC_002945.3"/>
</dbReference>
<dbReference type="SMR" id="Q7TYX4"/>
<dbReference type="KEGG" id="mbo:BQ2027_MB2218"/>
<dbReference type="PATRIC" id="fig|233413.5.peg.2434"/>
<dbReference type="Proteomes" id="UP000001419">
    <property type="component" value="Chromosome"/>
</dbReference>
<dbReference type="GO" id="GO:0005886">
    <property type="term" value="C:plasma membrane"/>
    <property type="evidence" value="ECO:0007669"/>
    <property type="project" value="UniProtKB-SubCell"/>
</dbReference>
<dbReference type="GO" id="GO:0051537">
    <property type="term" value="F:2 iron, 2 sulfur cluster binding"/>
    <property type="evidence" value="ECO:0007669"/>
    <property type="project" value="UniProtKB-KW"/>
</dbReference>
<dbReference type="GO" id="GO:0046872">
    <property type="term" value="F:metal ion binding"/>
    <property type="evidence" value="ECO:0007669"/>
    <property type="project" value="UniProtKB-KW"/>
</dbReference>
<dbReference type="GO" id="GO:0004497">
    <property type="term" value="F:monooxygenase activity"/>
    <property type="evidence" value="ECO:0007669"/>
    <property type="project" value="UniProtKB-ARBA"/>
</dbReference>
<dbReference type="GO" id="GO:0016705">
    <property type="term" value="F:oxidoreductase activity, acting on paired donors, with incorporation or reduction of molecular oxygen"/>
    <property type="evidence" value="ECO:0007669"/>
    <property type="project" value="UniProtKB-ARBA"/>
</dbReference>
<dbReference type="CDD" id="cd03467">
    <property type="entry name" value="Rieske"/>
    <property type="match status" value="1"/>
</dbReference>
<dbReference type="FunFam" id="2.102.10.10:FF:000010">
    <property type="entry name" value="Ubiquinol-cytochrome c reductase iron-sulfur subunit"/>
    <property type="match status" value="1"/>
</dbReference>
<dbReference type="Gene3D" id="2.102.10.10">
    <property type="entry name" value="Rieske [2Fe-2S] iron-sulphur domain"/>
    <property type="match status" value="1"/>
</dbReference>
<dbReference type="InterPro" id="IPR045603">
    <property type="entry name" value="QcrA_N"/>
</dbReference>
<dbReference type="InterPro" id="IPR017941">
    <property type="entry name" value="Rieske_2Fe-2S"/>
</dbReference>
<dbReference type="InterPro" id="IPR036922">
    <property type="entry name" value="Rieske_2Fe-2S_sf"/>
</dbReference>
<dbReference type="InterPro" id="IPR014349">
    <property type="entry name" value="Rieske_Fe-S_prot"/>
</dbReference>
<dbReference type="PANTHER" id="PTHR10134">
    <property type="entry name" value="CYTOCHROME B-C1 COMPLEX SUBUNIT RIESKE, MITOCHONDRIAL"/>
    <property type="match status" value="1"/>
</dbReference>
<dbReference type="Pfam" id="PF19297">
    <property type="entry name" value="QcrA_N"/>
    <property type="match status" value="1"/>
</dbReference>
<dbReference type="Pfam" id="PF00355">
    <property type="entry name" value="Rieske"/>
    <property type="match status" value="1"/>
</dbReference>
<dbReference type="SUPFAM" id="SSF50022">
    <property type="entry name" value="ISP domain"/>
    <property type="match status" value="1"/>
</dbReference>
<dbReference type="PROSITE" id="PS51296">
    <property type="entry name" value="RIESKE"/>
    <property type="match status" value="1"/>
</dbReference>
<gene>
    <name type="primary">qcrA</name>
    <name type="ordered locus">BQ2027_MB2218</name>
</gene>
<feature type="chain" id="PRO_0000127791" description="Cytochrome bc1 complex Rieske iron-sulfur subunit">
    <location>
        <begin position="1"/>
        <end position="429"/>
    </location>
</feature>
<feature type="transmembrane region" description="Helical" evidence="2">
    <location>
        <begin position="96"/>
        <end position="116"/>
    </location>
</feature>
<feature type="transmembrane region" description="Helical" evidence="2">
    <location>
        <begin position="137"/>
        <end position="157"/>
    </location>
</feature>
<feature type="transmembrane region" description="Helical" evidence="2">
    <location>
        <begin position="207"/>
        <end position="227"/>
    </location>
</feature>
<feature type="domain" description="Rieske" evidence="3">
    <location>
        <begin position="316"/>
        <end position="410"/>
    </location>
</feature>
<feature type="region of interest" description="Disordered" evidence="4">
    <location>
        <begin position="1"/>
        <end position="45"/>
    </location>
</feature>
<feature type="binding site" evidence="3">
    <location>
        <position position="353"/>
    </location>
    <ligand>
        <name>[2Fe-2S] cluster</name>
        <dbReference type="ChEBI" id="CHEBI:190135"/>
    </ligand>
</feature>
<feature type="binding site" evidence="3">
    <location>
        <position position="355"/>
    </location>
    <ligand>
        <name>[2Fe-2S] cluster</name>
        <dbReference type="ChEBI" id="CHEBI:190135"/>
    </ligand>
</feature>
<feature type="binding site" evidence="3">
    <location>
        <position position="372"/>
    </location>
    <ligand>
        <name>[2Fe-2S] cluster</name>
        <dbReference type="ChEBI" id="CHEBI:190135"/>
    </ligand>
</feature>
<feature type="binding site" evidence="3">
    <location>
        <position position="375"/>
    </location>
    <ligand>
        <name>[2Fe-2S] cluster</name>
        <dbReference type="ChEBI" id="CHEBI:190135"/>
    </ligand>
</feature>
<feature type="disulfide bond" evidence="3">
    <location>
        <begin position="358"/>
        <end position="374"/>
    </location>
</feature>
<sequence>MSRADDDAVGVPPTCGGRSDEEERRIVPGPNPQDGAKDGAKATAVPREPDEAALAAMSNQELLALGGKLDGVRIAYKEPRWPVEGTKAEKRAERSVAVWLLLGGVFGLALLLIFLFWPWEFKAADGESDFIYSLTTPLYGLTFGLSILSIAIGAVLYQKRFIPEEISIQERHDGASREIDRKTVVANLTDAFEGSTIRRRKLIGLSFGVGMGAFGLGTLVAFAGGLIKNPWKPVVPTAEGKKAVLWTSGWTPRYQGETIYLARATGTEDGPPFIKMRPEDIDAGGMETVFPWRESDGDGTTVESHHKLQEIAMGIRNPVMLIRIKPSDLGRVVKRKGQESFNFGEFFAFTKVCSHLGCPSSLYEQQSYRILCPCHQSQFDALHFAKPIFGPAARALAQLPITIDTDGYLVANGDFVEPVGPAFWERTTT</sequence>
<proteinExistence type="inferred from homology"/>
<keyword id="KW-0001">2Fe-2S</keyword>
<keyword id="KW-1003">Cell membrane</keyword>
<keyword id="KW-1015">Disulfide bond</keyword>
<keyword id="KW-0249">Electron transport</keyword>
<keyword id="KW-0408">Iron</keyword>
<keyword id="KW-0411">Iron-sulfur</keyword>
<keyword id="KW-0472">Membrane</keyword>
<keyword id="KW-0479">Metal-binding</keyword>
<keyword id="KW-0560">Oxidoreductase</keyword>
<keyword id="KW-1185">Reference proteome</keyword>
<keyword id="KW-0679">Respiratory chain</keyword>
<keyword id="KW-0812">Transmembrane</keyword>
<keyword id="KW-1133">Transmembrane helix</keyword>
<keyword id="KW-0813">Transport</keyword>